<gene>
    <name evidence="2" type="primary">ileS</name>
    <name type="ordered locus">MTH_1375</name>
</gene>
<protein>
    <recommendedName>
        <fullName evidence="2">Isoleucine--tRNA ligase</fullName>
        <ecNumber evidence="2">6.1.1.5</ecNumber>
    </recommendedName>
    <alternativeName>
        <fullName evidence="2">Isoleucyl-tRNA synthetase</fullName>
        <shortName evidence="2">IleRS</shortName>
    </alternativeName>
</protein>
<reference key="1">
    <citation type="journal article" date="1997" name="J. Bacteriol.">
        <title>Complete genome sequence of Methanobacterium thermoautotrophicum deltaH: functional analysis and comparative genomics.</title>
        <authorList>
            <person name="Smith D.R."/>
            <person name="Doucette-Stamm L.A."/>
            <person name="Deloughery C."/>
            <person name="Lee H.-M."/>
            <person name="Dubois J."/>
            <person name="Aldredge T."/>
            <person name="Bashirzadeh R."/>
            <person name="Blakely D."/>
            <person name="Cook R."/>
            <person name="Gilbert K."/>
            <person name="Harrison D."/>
            <person name="Hoang L."/>
            <person name="Keagle P."/>
            <person name="Lumm W."/>
            <person name="Pothier B."/>
            <person name="Qiu D."/>
            <person name="Spadafora R."/>
            <person name="Vicare R."/>
            <person name="Wang Y."/>
            <person name="Wierzbowski J."/>
            <person name="Gibson R."/>
            <person name="Jiwani N."/>
            <person name="Caruso A."/>
            <person name="Bush D."/>
            <person name="Safer H."/>
            <person name="Patwell D."/>
            <person name="Prabhakar S."/>
            <person name="McDougall S."/>
            <person name="Shimer G."/>
            <person name="Goyal A."/>
            <person name="Pietrovski S."/>
            <person name="Church G.M."/>
            <person name="Daniels C.J."/>
            <person name="Mao J.-I."/>
            <person name="Rice P."/>
            <person name="Noelling J."/>
            <person name="Reeve J.N."/>
        </authorList>
    </citation>
    <scope>NUCLEOTIDE SEQUENCE [LARGE SCALE GENOMIC DNA]</scope>
    <source>
        <strain>ATCC 29096 / DSM 1053 / JCM 10044 / NBRC 100330 / Delta H</strain>
    </source>
</reference>
<dbReference type="EC" id="6.1.1.5" evidence="2"/>
<dbReference type="EMBL" id="AE000666">
    <property type="protein sequence ID" value="AAB85852.1"/>
    <property type="molecule type" value="Genomic_DNA"/>
</dbReference>
<dbReference type="PIR" id="H69049">
    <property type="entry name" value="H69049"/>
</dbReference>
<dbReference type="RefSeq" id="WP_010876987.1">
    <property type="nucleotide sequence ID" value="NC_000916.1"/>
</dbReference>
<dbReference type="SMR" id="O27428"/>
<dbReference type="FunCoup" id="O27428">
    <property type="interactions" value="209"/>
</dbReference>
<dbReference type="STRING" id="187420.MTH_1375"/>
<dbReference type="PaxDb" id="187420-MTH_1375"/>
<dbReference type="EnsemblBacteria" id="AAB85852">
    <property type="protein sequence ID" value="AAB85852"/>
    <property type="gene ID" value="MTH_1375"/>
</dbReference>
<dbReference type="GeneID" id="1471092"/>
<dbReference type="KEGG" id="mth:MTH_1375"/>
<dbReference type="PATRIC" id="fig|187420.15.peg.1340"/>
<dbReference type="HOGENOM" id="CLU_001493_1_1_2"/>
<dbReference type="InParanoid" id="O27428"/>
<dbReference type="Proteomes" id="UP000005223">
    <property type="component" value="Chromosome"/>
</dbReference>
<dbReference type="GO" id="GO:0005737">
    <property type="term" value="C:cytoplasm"/>
    <property type="evidence" value="ECO:0007669"/>
    <property type="project" value="UniProtKB-SubCell"/>
</dbReference>
<dbReference type="GO" id="GO:0002161">
    <property type="term" value="F:aminoacyl-tRNA deacylase activity"/>
    <property type="evidence" value="ECO:0007669"/>
    <property type="project" value="InterPro"/>
</dbReference>
<dbReference type="GO" id="GO:0005524">
    <property type="term" value="F:ATP binding"/>
    <property type="evidence" value="ECO:0007669"/>
    <property type="project" value="UniProtKB-UniRule"/>
</dbReference>
<dbReference type="GO" id="GO:0004822">
    <property type="term" value="F:isoleucine-tRNA ligase activity"/>
    <property type="evidence" value="ECO:0007669"/>
    <property type="project" value="UniProtKB-UniRule"/>
</dbReference>
<dbReference type="GO" id="GO:0000049">
    <property type="term" value="F:tRNA binding"/>
    <property type="evidence" value="ECO:0007669"/>
    <property type="project" value="InterPro"/>
</dbReference>
<dbReference type="GO" id="GO:0008270">
    <property type="term" value="F:zinc ion binding"/>
    <property type="evidence" value="ECO:0007669"/>
    <property type="project" value="UniProtKB-UniRule"/>
</dbReference>
<dbReference type="GO" id="GO:0006428">
    <property type="term" value="P:isoleucyl-tRNA aminoacylation"/>
    <property type="evidence" value="ECO:0007669"/>
    <property type="project" value="UniProtKB-UniRule"/>
</dbReference>
<dbReference type="CDD" id="cd07961">
    <property type="entry name" value="Anticodon_Ia_Ile_ABEc"/>
    <property type="match status" value="1"/>
</dbReference>
<dbReference type="CDD" id="cd00818">
    <property type="entry name" value="IleRS_core"/>
    <property type="match status" value="1"/>
</dbReference>
<dbReference type="FunFam" id="3.40.50.620:FF:000286">
    <property type="entry name" value="Isoleucine--tRNA ligase"/>
    <property type="match status" value="1"/>
</dbReference>
<dbReference type="FunFam" id="1.10.730.10:FF:000033">
    <property type="entry name" value="Valine--tRNA ligase"/>
    <property type="match status" value="1"/>
</dbReference>
<dbReference type="Gene3D" id="3.30.720.200">
    <property type="match status" value="1"/>
</dbReference>
<dbReference type="Gene3D" id="3.40.50.620">
    <property type="entry name" value="HUPs"/>
    <property type="match status" value="2"/>
</dbReference>
<dbReference type="Gene3D" id="1.10.730.10">
    <property type="entry name" value="Isoleucyl-tRNA Synthetase, Domain 1"/>
    <property type="match status" value="1"/>
</dbReference>
<dbReference type="HAMAP" id="MF_02003">
    <property type="entry name" value="Ile_tRNA_synth_type2"/>
    <property type="match status" value="1"/>
</dbReference>
<dbReference type="InterPro" id="IPR001412">
    <property type="entry name" value="aa-tRNA-synth_I_CS"/>
</dbReference>
<dbReference type="InterPro" id="IPR002300">
    <property type="entry name" value="aa-tRNA-synth_Ia"/>
</dbReference>
<dbReference type="InterPro" id="IPR033709">
    <property type="entry name" value="Anticodon_Ile_ABEc"/>
</dbReference>
<dbReference type="InterPro" id="IPR002301">
    <property type="entry name" value="Ile-tRNA-ligase"/>
</dbReference>
<dbReference type="InterPro" id="IPR023586">
    <property type="entry name" value="Ile-tRNA-ligase_type2"/>
</dbReference>
<dbReference type="InterPro" id="IPR013155">
    <property type="entry name" value="M/V/L/I-tRNA-synth_anticd-bd"/>
</dbReference>
<dbReference type="InterPro" id="IPR014729">
    <property type="entry name" value="Rossmann-like_a/b/a_fold"/>
</dbReference>
<dbReference type="InterPro" id="IPR009080">
    <property type="entry name" value="tRNAsynth_Ia_anticodon-bd"/>
</dbReference>
<dbReference type="InterPro" id="IPR009008">
    <property type="entry name" value="Val/Leu/Ile-tRNA-synth_edit"/>
</dbReference>
<dbReference type="NCBIfam" id="TIGR00392">
    <property type="entry name" value="ileS"/>
    <property type="match status" value="1"/>
</dbReference>
<dbReference type="PANTHER" id="PTHR42780:SF1">
    <property type="entry name" value="ISOLEUCINE--TRNA LIGASE, CYTOPLASMIC"/>
    <property type="match status" value="1"/>
</dbReference>
<dbReference type="PANTHER" id="PTHR42780">
    <property type="entry name" value="SOLEUCYL-TRNA SYNTHETASE"/>
    <property type="match status" value="1"/>
</dbReference>
<dbReference type="Pfam" id="PF08264">
    <property type="entry name" value="Anticodon_1"/>
    <property type="match status" value="1"/>
</dbReference>
<dbReference type="Pfam" id="PF19302">
    <property type="entry name" value="DUF5915"/>
    <property type="match status" value="1"/>
</dbReference>
<dbReference type="Pfam" id="PF00133">
    <property type="entry name" value="tRNA-synt_1"/>
    <property type="match status" value="1"/>
</dbReference>
<dbReference type="PRINTS" id="PR00984">
    <property type="entry name" value="TRNASYNTHILE"/>
</dbReference>
<dbReference type="SUPFAM" id="SSF47323">
    <property type="entry name" value="Anticodon-binding domain of a subclass of class I aminoacyl-tRNA synthetases"/>
    <property type="match status" value="1"/>
</dbReference>
<dbReference type="SUPFAM" id="SSF52374">
    <property type="entry name" value="Nucleotidylyl transferase"/>
    <property type="match status" value="1"/>
</dbReference>
<dbReference type="SUPFAM" id="SSF50677">
    <property type="entry name" value="ValRS/IleRS/LeuRS editing domain"/>
    <property type="match status" value="1"/>
</dbReference>
<dbReference type="PROSITE" id="PS00178">
    <property type="entry name" value="AA_TRNA_LIGASE_I"/>
    <property type="match status" value="1"/>
</dbReference>
<name>SYI_METTH</name>
<organism>
    <name type="scientific">Methanothermobacter thermautotrophicus (strain ATCC 29096 / DSM 1053 / JCM 10044 / NBRC 100330 / Delta H)</name>
    <name type="common">Methanobacterium thermoautotrophicum</name>
    <dbReference type="NCBI Taxonomy" id="187420"/>
    <lineage>
        <taxon>Archaea</taxon>
        <taxon>Methanobacteriati</taxon>
        <taxon>Methanobacteriota</taxon>
        <taxon>Methanomada group</taxon>
        <taxon>Methanobacteria</taxon>
        <taxon>Methanobacteriales</taxon>
        <taxon>Methanobacteriaceae</taxon>
        <taxon>Methanothermobacter</taxon>
    </lineage>
</organism>
<keyword id="KW-0030">Aminoacyl-tRNA synthetase</keyword>
<keyword id="KW-0067">ATP-binding</keyword>
<keyword id="KW-0963">Cytoplasm</keyword>
<keyword id="KW-0436">Ligase</keyword>
<keyword id="KW-0479">Metal-binding</keyword>
<keyword id="KW-0547">Nucleotide-binding</keyword>
<keyword id="KW-0648">Protein biosynthesis</keyword>
<keyword id="KW-1185">Reference proteome</keyword>
<keyword id="KW-0862">Zinc</keyword>
<accession>O27428</accession>
<feature type="initiator methionine" description="Removed" evidence="1">
    <location>
        <position position="1"/>
    </location>
</feature>
<feature type="chain" id="PRO_0000098578" description="Isoleucine--tRNA ligase">
    <location>
        <begin position="2"/>
        <end position="1044"/>
    </location>
</feature>
<feature type="short sequence motif" description="'HIGH' region">
    <location>
        <begin position="49"/>
        <end position="59"/>
    </location>
</feature>
<feature type="short sequence motif" description="'KMSKS' region">
    <location>
        <begin position="591"/>
        <end position="595"/>
    </location>
</feature>
<feature type="binding site" evidence="2">
    <location>
        <position position="594"/>
    </location>
    <ligand>
        <name>ATP</name>
        <dbReference type="ChEBI" id="CHEBI:30616"/>
    </ligand>
</feature>
<proteinExistence type="inferred from homology"/>
<comment type="function">
    <text evidence="2">Catalyzes the attachment of isoleucine to tRNA(Ile). As IleRS can inadvertently accommodate and process structurally similar amino acids such as valine, to avoid such errors it has two additional distinct tRNA(Ile)-dependent editing activities. One activity is designated as 'pretransfer' editing and involves the hydrolysis of activated Val-AMP. The other activity is designated 'posttransfer' editing and involves deacylation of mischarged Val-tRNA(Ile).</text>
</comment>
<comment type="catalytic activity">
    <reaction evidence="2">
        <text>tRNA(Ile) + L-isoleucine + ATP = L-isoleucyl-tRNA(Ile) + AMP + diphosphate</text>
        <dbReference type="Rhea" id="RHEA:11060"/>
        <dbReference type="Rhea" id="RHEA-COMP:9666"/>
        <dbReference type="Rhea" id="RHEA-COMP:9695"/>
        <dbReference type="ChEBI" id="CHEBI:30616"/>
        <dbReference type="ChEBI" id="CHEBI:33019"/>
        <dbReference type="ChEBI" id="CHEBI:58045"/>
        <dbReference type="ChEBI" id="CHEBI:78442"/>
        <dbReference type="ChEBI" id="CHEBI:78528"/>
        <dbReference type="ChEBI" id="CHEBI:456215"/>
        <dbReference type="EC" id="6.1.1.5"/>
    </reaction>
</comment>
<comment type="cofactor">
    <cofactor evidence="2">
        <name>Zn(2+)</name>
        <dbReference type="ChEBI" id="CHEBI:29105"/>
    </cofactor>
</comment>
<comment type="subunit">
    <text evidence="2">Monomer.</text>
</comment>
<comment type="subcellular location">
    <subcellularLocation>
        <location evidence="2">Cytoplasm</location>
    </subcellularLocation>
</comment>
<comment type="domain">
    <text evidence="2">IleRS has two distinct active sites: one for aminoacylation and one for editing. The misactivated valine is translocated from the active site to the editing site, which sterically excludes the correctly activated isoleucine. The single editing site contains two valyl binding pockets, one specific for each substrate (Val-AMP or Val-tRNA(Ile)).</text>
</comment>
<comment type="similarity">
    <text evidence="2">Belongs to the class-I aminoacyl-tRNA synthetase family. IleS type 2 subfamily.</text>
</comment>
<sequence length="1044" mass="120980">MPIQEAEKSYRPHRIEEKVQSFWEERDIYERVKELREDRPRYSFLDGPPYCSGRIHLGTAWNKIMKDTYLRFKSMKGFNVRRQPGWDTHGLPIEHKVEGLLGVRSKKDIEDKIGIEEFVNKCREFAVENKAVMTGQFQRLGVWMDWDDPYVTFDPAYMESCWWTLKRAHEKDLLVRDLRVITWCPRCETALALAEIDYHDKEDPSIYVKFPVSGDTHILVWTTTPWTLPANMAVAVHPDFEYAYARLDGETYIMAEALVEKVLGEEAEILKRVKGTELEGLTYRHPLDDEVPLHREIEHRVILGDHVTLTEGTGCVHTAPGHGPEDFEIGKKYGLEVICPVDEAGIFTEEAGKYSGRFVKDADEDIIADLRSKGLLLKAGTISHRYGFCWRCKTPIIYLATEQWFLKITEIKDKMLRELDRVQWVPSWAGESRFRNWIENARDWTISRQRYWGIPIPIWICEECDSIHVVGSIDELRELAVEGELEGDFIHRPHVDRIVLECGECGGRMKRTPDVLDVWIDSGVAGWAALHYPSETELFREWFPYDFITEGHDQTRGWFYSQLGCGVIALDEVPYRRVLMHGFTLDEEGRKMSKSLGNVVEPEDVIEKYGADVLRFYLLWENKPWEDLKFVWDELRNVNKMFNILWNVYVFATTYMSLDRFQPGDHSAEDLSFRDEDRWILSRINSVALKVTEAIENLHFHRATREIHDFIVEDLSRWYIRLIRSRTWIERDDPDKLAAYHTLYTVLKTLIVTLSPMAPHVCEDIYQNLVRGAEPDSPESIHMLDWILDEGAVDSQLEADMDIVREIIEACARARDTARYKLRWPVREMVVVSEDEGVLKAAESLKNVIAEQANAKSIKTSTEFPDMKIIARPNPATLGPRLRQDIPLVMRELEGADGSAVKAALDSDGEFTVETDGKKFKLTSEDIVFETELPENIVSAQFDGGSVFIDTELTPEIMSEAMARELVRRIQDMRKDLDLDVEASIEVSVKCSEEFRELTEPQREFIENEVRASTLSFDYSELEYTKEWKISDENLIISIKPAKV</sequence>
<evidence type="ECO:0000250" key="1"/>
<evidence type="ECO:0000255" key="2">
    <source>
        <dbReference type="HAMAP-Rule" id="MF_02003"/>
    </source>
</evidence>